<accession>P05351</accession>
<sequence>MRCFERYRLHLNRLSLSNAMMRVISSCAPSLGGAMAWSISSCGPAAAQSAGGGTDPATMVNNICTFILGPFGQSLAVLGIVAIGISWMFGRASLGLVAGVVGGIVIMFGASFLGQTLTGGS</sequence>
<geneLocation type="plasmid">
    <name>pTi15955</name>
</geneLocation>
<gene>
    <name type="primary">virB2</name>
</gene>
<comment type="function">
    <text>VirB proteins are suggested to act at the bacterial surface and there play an important role in directing T-DNA transfer to plant cells.</text>
</comment>
<comment type="subunit">
    <text evidence="1">Interacts with host plant RTNLB1 protein.</text>
</comment>
<comment type="subcellular location">
    <subcellularLocation>
        <location evidence="3">Cell outer membrane</location>
        <topology evidence="3">Multi-pass membrane protein</topology>
    </subcellularLocation>
</comment>
<comment type="similarity">
    <text evidence="3">Belongs to the virB2 family.</text>
</comment>
<protein>
    <recommendedName>
        <fullName>Protein virB2</fullName>
    </recommendedName>
</protein>
<reference key="1">
    <citation type="journal article" date="1988" name="Nucleic Acids Res.">
        <title>Analysis of the complete nucleotide sequence of the Agrobacterium tumefaciens virB operon.</title>
        <authorList>
            <person name="Thompson D.V."/>
            <person name="Melchers L.S."/>
            <person name="Idler K.B."/>
            <person name="Shilperoort R.A."/>
            <person name="Hooykaas P.J.J."/>
        </authorList>
    </citation>
    <scope>NUCLEOTIDE SEQUENCE [GENOMIC DNA]</scope>
</reference>
<organism>
    <name type="scientific">Agrobacterium tumefaciens (strain 15955)</name>
    <dbReference type="NCBI Taxonomy" id="190386"/>
    <lineage>
        <taxon>Bacteria</taxon>
        <taxon>Pseudomonadati</taxon>
        <taxon>Pseudomonadota</taxon>
        <taxon>Alphaproteobacteria</taxon>
        <taxon>Hyphomicrobiales</taxon>
        <taxon>Rhizobiaceae</taxon>
        <taxon>Rhizobium/Agrobacterium group</taxon>
        <taxon>Agrobacterium</taxon>
        <taxon>Agrobacterium tumefaciens complex</taxon>
    </lineage>
</organism>
<evidence type="ECO:0000250" key="1"/>
<evidence type="ECO:0000255" key="2"/>
<evidence type="ECO:0000305" key="3"/>
<name>VIRB2_AGRT9</name>
<feature type="signal peptide" evidence="2">
    <location>
        <begin position="1"/>
        <end position="19"/>
    </location>
</feature>
<feature type="chain" id="PRO_0000022661" description="Protein virB2">
    <location>
        <begin position="20"/>
        <end position="121"/>
    </location>
</feature>
<feature type="transmembrane region" description="Helical" evidence="2">
    <location>
        <begin position="65"/>
        <end position="85"/>
    </location>
</feature>
<feature type="transmembrane region" description="Helical" evidence="2">
    <location>
        <begin position="94"/>
        <end position="114"/>
    </location>
</feature>
<proteinExistence type="inferred from homology"/>
<keyword id="KW-0998">Cell outer membrane</keyword>
<keyword id="KW-0192">Crown gall tumor</keyword>
<keyword id="KW-0472">Membrane</keyword>
<keyword id="KW-0614">Plasmid</keyword>
<keyword id="KW-0732">Signal</keyword>
<keyword id="KW-0812">Transmembrane</keyword>
<keyword id="KW-1133">Transmembrane helix</keyword>
<dbReference type="EMBL" id="X06826">
    <property type="protein sequence ID" value="CAA29973.1"/>
    <property type="molecule type" value="Genomic_DNA"/>
</dbReference>
<dbReference type="PIR" id="S00778">
    <property type="entry name" value="B2AG55"/>
</dbReference>
<dbReference type="RefSeq" id="NP_059800.1">
    <property type="nucleotide sequence ID" value="NC_002377.1"/>
</dbReference>
<dbReference type="SMR" id="P05351"/>
<dbReference type="TCDB" id="3.A.7.1.1">
    <property type="family name" value="the type iv (conjugal dna-protein transfer or virb) secretory pathway (ivsp) family"/>
</dbReference>
<dbReference type="GO" id="GO:0009279">
    <property type="term" value="C:cell outer membrane"/>
    <property type="evidence" value="ECO:0007669"/>
    <property type="project" value="UniProtKB-SubCell"/>
</dbReference>
<dbReference type="InterPro" id="IPR007039">
    <property type="entry name" value="TrbC/VirB2"/>
</dbReference>
<dbReference type="NCBIfam" id="NF010431">
    <property type="entry name" value="PRK13857.1"/>
    <property type="match status" value="1"/>
</dbReference>
<dbReference type="Pfam" id="PF04956">
    <property type="entry name" value="TrbC"/>
    <property type="match status" value="1"/>
</dbReference>